<comment type="function">
    <text evidence="1">Catalyzes the dephosphorylation of undecaprenyl diphosphate (UPP).</text>
</comment>
<comment type="catalytic activity">
    <reaction evidence="1">
        <text>di-trans,octa-cis-undecaprenyl diphosphate + H2O = di-trans,octa-cis-undecaprenyl phosphate + phosphate + H(+)</text>
        <dbReference type="Rhea" id="RHEA:28094"/>
        <dbReference type="ChEBI" id="CHEBI:15377"/>
        <dbReference type="ChEBI" id="CHEBI:15378"/>
        <dbReference type="ChEBI" id="CHEBI:43474"/>
        <dbReference type="ChEBI" id="CHEBI:58405"/>
        <dbReference type="ChEBI" id="CHEBI:60392"/>
        <dbReference type="EC" id="3.6.1.27"/>
    </reaction>
</comment>
<comment type="subcellular location">
    <subcellularLocation>
        <location evidence="1">Cell membrane</location>
        <topology evidence="1">Multi-pass membrane protein</topology>
    </subcellularLocation>
</comment>
<comment type="similarity">
    <text evidence="1">Belongs to the UppP family.</text>
</comment>
<gene>
    <name evidence="1" type="primary">uppP</name>
    <name type="ordered locus">Mbur_2081</name>
</gene>
<reference key="1">
    <citation type="journal article" date="2009" name="ISME J.">
        <title>The genome sequence of the psychrophilic archaeon, Methanococcoides burtonii: the role of genome evolution in cold adaptation.</title>
        <authorList>
            <person name="Allen M.A."/>
            <person name="Lauro F.M."/>
            <person name="Williams T.J."/>
            <person name="Burg D."/>
            <person name="Siddiqui K.S."/>
            <person name="De Francisci D."/>
            <person name="Chong K.W."/>
            <person name="Pilak O."/>
            <person name="Chew H.H."/>
            <person name="De Maere M.Z."/>
            <person name="Ting L."/>
            <person name="Katrib M."/>
            <person name="Ng C."/>
            <person name="Sowers K.R."/>
            <person name="Galperin M.Y."/>
            <person name="Anderson I.J."/>
            <person name="Ivanova N."/>
            <person name="Dalin E."/>
            <person name="Martinez M."/>
            <person name="Lapidus A."/>
            <person name="Hauser L."/>
            <person name="Land M."/>
            <person name="Thomas T."/>
            <person name="Cavicchioli R."/>
        </authorList>
    </citation>
    <scope>NUCLEOTIDE SEQUENCE [LARGE SCALE GENOMIC DNA]</scope>
    <source>
        <strain>DSM 6242 / NBRC 107633 / OCM 468 / ACE-M</strain>
    </source>
</reference>
<keyword id="KW-1003">Cell membrane</keyword>
<keyword id="KW-0378">Hydrolase</keyword>
<keyword id="KW-0472">Membrane</keyword>
<keyword id="KW-0812">Transmembrane</keyword>
<keyword id="KW-1133">Transmembrane helix</keyword>
<name>UPPP_METBU</name>
<protein>
    <recommendedName>
        <fullName evidence="1">Undecaprenyl-diphosphatase</fullName>
        <ecNumber evidence="1">3.6.1.27</ecNumber>
    </recommendedName>
    <alternativeName>
        <fullName evidence="1">Undecaprenyl pyrophosphate phosphatase</fullName>
    </alternativeName>
</protein>
<sequence>MLSLSEAIILGIVQGLAEWLPISSEGMTSLVMVTFFGRSLSEAIPISIWLHLGTLLAAIVYFREDVKVLLYGVPDYVRSFSRKQPHDPVISFLLISTALTGIVGLPLLLFVTDNVEISGGSATAVIGIMLIVTGILQRTVSRDESLSRVPGMSDSLVSGVAQGFAAIPGISRSGITMSALLLRKFDAADAIRLSFLMSIPAVLVAEIGVGLMGMVELDINSIVGLFFAFAFGLVTIDLFLKVAKKVDFSYFCIGLGVLSVLTMFL</sequence>
<evidence type="ECO:0000255" key="1">
    <source>
        <dbReference type="HAMAP-Rule" id="MF_01006"/>
    </source>
</evidence>
<organism>
    <name type="scientific">Methanococcoides burtonii (strain DSM 6242 / NBRC 107633 / OCM 468 / ACE-M)</name>
    <dbReference type="NCBI Taxonomy" id="259564"/>
    <lineage>
        <taxon>Archaea</taxon>
        <taxon>Methanobacteriati</taxon>
        <taxon>Methanobacteriota</taxon>
        <taxon>Stenosarchaea group</taxon>
        <taxon>Methanomicrobia</taxon>
        <taxon>Methanosarcinales</taxon>
        <taxon>Methanosarcinaceae</taxon>
        <taxon>Methanococcoides</taxon>
    </lineage>
</organism>
<proteinExistence type="inferred from homology"/>
<feature type="chain" id="PRO_0000290783" description="Undecaprenyl-diphosphatase">
    <location>
        <begin position="1"/>
        <end position="265"/>
    </location>
</feature>
<feature type="transmembrane region" description="Helical" evidence="1">
    <location>
        <begin position="42"/>
        <end position="62"/>
    </location>
</feature>
<feature type="transmembrane region" description="Helical" evidence="1">
    <location>
        <begin position="90"/>
        <end position="110"/>
    </location>
</feature>
<feature type="transmembrane region" description="Helical" evidence="1">
    <location>
        <begin position="115"/>
        <end position="135"/>
    </location>
</feature>
<feature type="transmembrane region" description="Helical" evidence="1">
    <location>
        <begin position="160"/>
        <end position="182"/>
    </location>
</feature>
<feature type="transmembrane region" description="Helical" evidence="1">
    <location>
        <begin position="195"/>
        <end position="215"/>
    </location>
</feature>
<feature type="transmembrane region" description="Helical" evidence="1">
    <location>
        <begin position="222"/>
        <end position="242"/>
    </location>
</feature>
<feature type="transmembrane region" description="Helical" evidence="1">
    <location>
        <begin position="245"/>
        <end position="265"/>
    </location>
</feature>
<dbReference type="EC" id="3.6.1.27" evidence="1"/>
<dbReference type="EMBL" id="CP000300">
    <property type="protein sequence ID" value="ABE52955.1"/>
    <property type="molecule type" value="Genomic_DNA"/>
</dbReference>
<dbReference type="RefSeq" id="WP_011500095.1">
    <property type="nucleotide sequence ID" value="NC_007955.1"/>
</dbReference>
<dbReference type="SMR" id="Q12UC1"/>
<dbReference type="STRING" id="259564.Mbur_2081"/>
<dbReference type="GeneID" id="3997463"/>
<dbReference type="KEGG" id="mbu:Mbur_2081"/>
<dbReference type="HOGENOM" id="CLU_060296_1_2_2"/>
<dbReference type="OrthoDB" id="65864at2157"/>
<dbReference type="Proteomes" id="UP000001979">
    <property type="component" value="Chromosome"/>
</dbReference>
<dbReference type="GO" id="GO:0005886">
    <property type="term" value="C:plasma membrane"/>
    <property type="evidence" value="ECO:0007669"/>
    <property type="project" value="UniProtKB-SubCell"/>
</dbReference>
<dbReference type="GO" id="GO:0050380">
    <property type="term" value="F:undecaprenyl-diphosphatase activity"/>
    <property type="evidence" value="ECO:0007669"/>
    <property type="project" value="UniProtKB-UniRule"/>
</dbReference>
<dbReference type="HAMAP" id="MF_01006">
    <property type="entry name" value="Undec_diphosphatase"/>
    <property type="match status" value="1"/>
</dbReference>
<dbReference type="InterPro" id="IPR003824">
    <property type="entry name" value="UppP"/>
</dbReference>
<dbReference type="PANTHER" id="PTHR30622">
    <property type="entry name" value="UNDECAPRENYL-DIPHOSPHATASE"/>
    <property type="match status" value="1"/>
</dbReference>
<dbReference type="PANTHER" id="PTHR30622:SF2">
    <property type="entry name" value="UNDECAPRENYL-DIPHOSPHATASE"/>
    <property type="match status" value="1"/>
</dbReference>
<dbReference type="Pfam" id="PF02673">
    <property type="entry name" value="BacA"/>
    <property type="match status" value="1"/>
</dbReference>
<accession>Q12UC1</accession>